<sequence>MTIFDNYEVWFVIGSQHLYGPETLRQVTQHAEHVVNALNTEAKLPCKLVLKPLGTTPDEITAICRDANYDDRCAGLVVWLHTFSPAKMWINGLTMLNKPLLQFHTQFNAALPWDSIDMDFMNLNQTAHGGREFGFIGARMRQQHAVVTGHWQDKQAHERIGSWMRQAVSKQDTRHLKVCRFGDNMREVAVTDGDKVAAQIKFGFSVNTWAVGDLVQVVNSISDGDVNALVDEYESCYTMTPATQIHGEKRQNVLEAARIELGMKRFLEQGGFHAFTTTFEDLHGLKQLPGLAVQRLMQQGYGFAGEGDWKTAALLRIMKVMSTGLQGGTSFMEDYTYHFEKGNDLVLGSHMLEVCPSIAVEEKPILDVQHLGIGGKDDPARLIFNTQTGPAIVASLIDLGDRYRLLVNCIDTVKTPHSLPKLPVANALWKAQPDLPTASEAWILAGGAHHTVFSHALNLNDMRQFAEMHDIEITVIDNDTRLPAFKDALRWNEVYYGFRR</sequence>
<comment type="function">
    <text evidence="1">Catalyzes the conversion of L-arabinose to L-ribulose.</text>
</comment>
<comment type="catalytic activity">
    <reaction evidence="1">
        <text>beta-L-arabinopyranose = L-ribulose</text>
        <dbReference type="Rhea" id="RHEA:14821"/>
        <dbReference type="ChEBI" id="CHEBI:16880"/>
        <dbReference type="ChEBI" id="CHEBI:40886"/>
        <dbReference type="EC" id="5.3.1.4"/>
    </reaction>
</comment>
<comment type="cofactor">
    <cofactor evidence="1">
        <name>Mn(2+)</name>
        <dbReference type="ChEBI" id="CHEBI:29035"/>
    </cofactor>
    <text evidence="1">Binds 1 Mn(2+) ion per subunit.</text>
</comment>
<comment type="pathway">
    <text evidence="1">Carbohydrate degradation; L-arabinose degradation via L-ribulose; D-xylulose 5-phosphate from L-arabinose (bacterial route): step 1/3.</text>
</comment>
<comment type="subunit">
    <text evidence="1">Homohexamer.</text>
</comment>
<comment type="similarity">
    <text evidence="1">Belongs to the arabinose isomerase family.</text>
</comment>
<evidence type="ECO:0000255" key="1">
    <source>
        <dbReference type="HAMAP-Rule" id="MF_00519"/>
    </source>
</evidence>
<accession>C4ZPY5</accession>
<organism>
    <name type="scientific">Escherichia coli (strain K12 / MC4100 / BW2952)</name>
    <dbReference type="NCBI Taxonomy" id="595496"/>
    <lineage>
        <taxon>Bacteria</taxon>
        <taxon>Pseudomonadati</taxon>
        <taxon>Pseudomonadota</taxon>
        <taxon>Gammaproteobacteria</taxon>
        <taxon>Enterobacterales</taxon>
        <taxon>Enterobacteriaceae</taxon>
        <taxon>Escherichia</taxon>
    </lineage>
</organism>
<protein>
    <recommendedName>
        <fullName evidence="1">L-arabinose isomerase</fullName>
        <ecNumber evidence="1">5.3.1.4</ecNumber>
    </recommendedName>
</protein>
<dbReference type="EC" id="5.3.1.4" evidence="1"/>
<dbReference type="EMBL" id="CP001396">
    <property type="protein sequence ID" value="ACR63624.1"/>
    <property type="molecule type" value="Genomic_DNA"/>
</dbReference>
<dbReference type="RefSeq" id="WP_000151734.1">
    <property type="nucleotide sequence ID" value="NC_012759.1"/>
</dbReference>
<dbReference type="SMR" id="C4ZPY5"/>
<dbReference type="GeneID" id="93777375"/>
<dbReference type="KEGG" id="ebw:BWG_0058"/>
<dbReference type="HOGENOM" id="CLU_045663_0_0_6"/>
<dbReference type="UniPathway" id="UPA00145">
    <property type="reaction ID" value="UER00565"/>
</dbReference>
<dbReference type="GO" id="GO:0005829">
    <property type="term" value="C:cytosol"/>
    <property type="evidence" value="ECO:0007669"/>
    <property type="project" value="TreeGrafter"/>
</dbReference>
<dbReference type="GO" id="GO:0008733">
    <property type="term" value="F:L-arabinose isomerase activity"/>
    <property type="evidence" value="ECO:0007669"/>
    <property type="project" value="UniProtKB-UniRule"/>
</dbReference>
<dbReference type="GO" id="GO:0030145">
    <property type="term" value="F:manganese ion binding"/>
    <property type="evidence" value="ECO:0007669"/>
    <property type="project" value="UniProtKB-UniRule"/>
</dbReference>
<dbReference type="GO" id="GO:0019569">
    <property type="term" value="P:L-arabinose catabolic process to xylulose 5-phosphate"/>
    <property type="evidence" value="ECO:0007669"/>
    <property type="project" value="UniProtKB-UniRule"/>
</dbReference>
<dbReference type="CDD" id="cd03557">
    <property type="entry name" value="L-arabinose_isomerase"/>
    <property type="match status" value="1"/>
</dbReference>
<dbReference type="FunFam" id="3.40.50.10940:FF:000001">
    <property type="entry name" value="L-arabinose isomerase"/>
    <property type="match status" value="1"/>
</dbReference>
<dbReference type="Gene3D" id="3.40.50.10940">
    <property type="match status" value="1"/>
</dbReference>
<dbReference type="HAMAP" id="MF_00519">
    <property type="entry name" value="Arabinose_Isome"/>
    <property type="match status" value="1"/>
</dbReference>
<dbReference type="InterPro" id="IPR024664">
    <property type="entry name" value="Ara_Isoase_C"/>
</dbReference>
<dbReference type="InterPro" id="IPR055390">
    <property type="entry name" value="AraA_central"/>
</dbReference>
<dbReference type="InterPro" id="IPR055389">
    <property type="entry name" value="AraA_N"/>
</dbReference>
<dbReference type="InterPro" id="IPR038583">
    <property type="entry name" value="AraA_N_sf"/>
</dbReference>
<dbReference type="InterPro" id="IPR004216">
    <property type="entry name" value="Fuc/Ara_isomerase_C"/>
</dbReference>
<dbReference type="InterPro" id="IPR009015">
    <property type="entry name" value="Fucose_isomerase_N/cen_sf"/>
</dbReference>
<dbReference type="InterPro" id="IPR003762">
    <property type="entry name" value="Lara_isomerase"/>
</dbReference>
<dbReference type="NCBIfam" id="NF002795">
    <property type="entry name" value="PRK02929.1"/>
    <property type="match status" value="1"/>
</dbReference>
<dbReference type="PANTHER" id="PTHR38464">
    <property type="entry name" value="L-ARABINOSE ISOMERASE"/>
    <property type="match status" value="1"/>
</dbReference>
<dbReference type="PANTHER" id="PTHR38464:SF1">
    <property type="entry name" value="L-ARABINOSE ISOMERASE"/>
    <property type="match status" value="1"/>
</dbReference>
<dbReference type="Pfam" id="PF24856">
    <property type="entry name" value="AraA_central"/>
    <property type="match status" value="1"/>
</dbReference>
<dbReference type="Pfam" id="PF02610">
    <property type="entry name" value="AraA_N"/>
    <property type="match status" value="1"/>
</dbReference>
<dbReference type="Pfam" id="PF11762">
    <property type="entry name" value="Arabinose_Iso_C"/>
    <property type="match status" value="1"/>
</dbReference>
<dbReference type="PIRSF" id="PIRSF001478">
    <property type="entry name" value="L-ara_isomerase"/>
    <property type="match status" value="1"/>
</dbReference>
<dbReference type="SUPFAM" id="SSF50443">
    <property type="entry name" value="FucI/AraA C-terminal domain-like"/>
    <property type="match status" value="1"/>
</dbReference>
<dbReference type="SUPFAM" id="SSF53743">
    <property type="entry name" value="FucI/AraA N-terminal and middle domains"/>
    <property type="match status" value="1"/>
</dbReference>
<reference key="1">
    <citation type="journal article" date="2009" name="J. Bacteriol.">
        <title>Genomic sequencing reveals regulatory mutations and recombinational events in the widely used MC4100 lineage of Escherichia coli K-12.</title>
        <authorList>
            <person name="Ferenci T."/>
            <person name="Zhou Z."/>
            <person name="Betteridge T."/>
            <person name="Ren Y."/>
            <person name="Liu Y."/>
            <person name="Feng L."/>
            <person name="Reeves P.R."/>
            <person name="Wang L."/>
        </authorList>
    </citation>
    <scope>NUCLEOTIDE SEQUENCE [LARGE SCALE GENOMIC DNA]</scope>
    <source>
        <strain>K12 / MC4100 / BW2952</strain>
    </source>
</reference>
<name>ARAA_ECOBW</name>
<gene>
    <name evidence="1" type="primary">araA</name>
    <name type="ordered locus">BWG_0058</name>
</gene>
<keyword id="KW-0054">Arabinose catabolism</keyword>
<keyword id="KW-0119">Carbohydrate metabolism</keyword>
<keyword id="KW-0413">Isomerase</keyword>
<keyword id="KW-0464">Manganese</keyword>
<keyword id="KW-0479">Metal-binding</keyword>
<feature type="chain" id="PRO_1000211741" description="L-arabinose isomerase">
    <location>
        <begin position="1"/>
        <end position="500"/>
    </location>
</feature>
<feature type="binding site" evidence="1">
    <location>
        <position position="306"/>
    </location>
    <ligand>
        <name>Mn(2+)</name>
        <dbReference type="ChEBI" id="CHEBI:29035"/>
    </ligand>
</feature>
<feature type="binding site" evidence="1">
    <location>
        <position position="333"/>
    </location>
    <ligand>
        <name>Mn(2+)</name>
        <dbReference type="ChEBI" id="CHEBI:29035"/>
    </ligand>
</feature>
<feature type="binding site" evidence="1">
    <location>
        <position position="350"/>
    </location>
    <ligand>
        <name>Mn(2+)</name>
        <dbReference type="ChEBI" id="CHEBI:29035"/>
    </ligand>
</feature>
<feature type="binding site" evidence="1">
    <location>
        <position position="450"/>
    </location>
    <ligand>
        <name>Mn(2+)</name>
        <dbReference type="ChEBI" id="CHEBI:29035"/>
    </ligand>
</feature>
<proteinExistence type="inferred from homology"/>